<accession>P60333</accession>
<feature type="chain" id="PRO_0000128930" description="DNA-directed RNA polymerase subunit omega">
    <location>
        <begin position="1"/>
        <end position="92"/>
    </location>
</feature>
<reference key="1">
    <citation type="journal article" date="2003" name="Nucleic Acids Res.">
        <title>The complete genome sequence and analysis of Corynebacterium diphtheriae NCTC13129.</title>
        <authorList>
            <person name="Cerdeno-Tarraga A.-M."/>
            <person name="Efstratiou A."/>
            <person name="Dover L.G."/>
            <person name="Holden M.T.G."/>
            <person name="Pallen M.J."/>
            <person name="Bentley S.D."/>
            <person name="Besra G.S."/>
            <person name="Churcher C.M."/>
            <person name="James K.D."/>
            <person name="De Zoysa A."/>
            <person name="Chillingworth T."/>
            <person name="Cronin A."/>
            <person name="Dowd L."/>
            <person name="Feltwell T."/>
            <person name="Hamlin N."/>
            <person name="Holroyd S."/>
            <person name="Jagels K."/>
            <person name="Moule S."/>
            <person name="Quail M.A."/>
            <person name="Rabbinowitsch E."/>
            <person name="Rutherford K.M."/>
            <person name="Thomson N.R."/>
            <person name="Unwin L."/>
            <person name="Whitehead S."/>
            <person name="Barrell B.G."/>
            <person name="Parkhill J."/>
        </authorList>
    </citation>
    <scope>NUCLEOTIDE SEQUENCE [LARGE SCALE GENOMIC DNA]</scope>
    <source>
        <strain>ATCC 700971 / NCTC 13129 / Biotype gravis</strain>
    </source>
</reference>
<protein>
    <recommendedName>
        <fullName evidence="1">DNA-directed RNA polymerase subunit omega</fullName>
        <shortName evidence="1">RNAP omega subunit</shortName>
        <ecNumber evidence="1">2.7.7.6</ecNumber>
    </recommendedName>
    <alternativeName>
        <fullName evidence="1">RNA polymerase omega subunit</fullName>
    </alternativeName>
    <alternativeName>
        <fullName evidence="1">Transcriptase subunit omega</fullName>
    </alternativeName>
</protein>
<sequence length="92" mass="10076">MSNVAENNDGVYDAPTGITAPPIDELLKHVSSKYALVIFAAKRARQINSYYQQADEGVFEFVGPLVTPEAQEKPLSIAMREIEAGLLDHEEG</sequence>
<proteinExistence type="inferred from homology"/>
<gene>
    <name evidence="1" type="primary">rpoZ</name>
    <name type="ordered locus">DIP1327</name>
</gene>
<evidence type="ECO:0000255" key="1">
    <source>
        <dbReference type="HAMAP-Rule" id="MF_00366"/>
    </source>
</evidence>
<name>RPOZ_CORDI</name>
<dbReference type="EC" id="2.7.7.6" evidence="1"/>
<dbReference type="EMBL" id="BX248357">
    <property type="protein sequence ID" value="CAE49855.1"/>
    <property type="molecule type" value="Genomic_DNA"/>
</dbReference>
<dbReference type="RefSeq" id="WP_003851632.1">
    <property type="nucleotide sequence ID" value="NC_002935.2"/>
</dbReference>
<dbReference type="SMR" id="P60333"/>
<dbReference type="STRING" id="257309.DIP1327"/>
<dbReference type="GeneID" id="29422893"/>
<dbReference type="KEGG" id="cdi:DIP1327"/>
<dbReference type="HOGENOM" id="CLU_125406_1_1_11"/>
<dbReference type="Proteomes" id="UP000002198">
    <property type="component" value="Chromosome"/>
</dbReference>
<dbReference type="GO" id="GO:0000428">
    <property type="term" value="C:DNA-directed RNA polymerase complex"/>
    <property type="evidence" value="ECO:0007669"/>
    <property type="project" value="UniProtKB-KW"/>
</dbReference>
<dbReference type="GO" id="GO:0003677">
    <property type="term" value="F:DNA binding"/>
    <property type="evidence" value="ECO:0007669"/>
    <property type="project" value="UniProtKB-UniRule"/>
</dbReference>
<dbReference type="GO" id="GO:0003899">
    <property type="term" value="F:DNA-directed RNA polymerase activity"/>
    <property type="evidence" value="ECO:0007669"/>
    <property type="project" value="UniProtKB-UniRule"/>
</dbReference>
<dbReference type="GO" id="GO:0006351">
    <property type="term" value="P:DNA-templated transcription"/>
    <property type="evidence" value="ECO:0007669"/>
    <property type="project" value="UniProtKB-UniRule"/>
</dbReference>
<dbReference type="Gene3D" id="3.90.940.10">
    <property type="match status" value="1"/>
</dbReference>
<dbReference type="HAMAP" id="MF_00366">
    <property type="entry name" value="RNApol_bact_RpoZ"/>
    <property type="match status" value="1"/>
</dbReference>
<dbReference type="InterPro" id="IPR003716">
    <property type="entry name" value="DNA-dir_RNA_pol_omega"/>
</dbReference>
<dbReference type="InterPro" id="IPR006110">
    <property type="entry name" value="Pol_omega/Rpo6/RPB6"/>
</dbReference>
<dbReference type="InterPro" id="IPR036161">
    <property type="entry name" value="RPB6/omega-like_sf"/>
</dbReference>
<dbReference type="NCBIfam" id="TIGR00690">
    <property type="entry name" value="rpoZ"/>
    <property type="match status" value="1"/>
</dbReference>
<dbReference type="PANTHER" id="PTHR34476">
    <property type="entry name" value="DNA-DIRECTED RNA POLYMERASE SUBUNIT OMEGA"/>
    <property type="match status" value="1"/>
</dbReference>
<dbReference type="PANTHER" id="PTHR34476:SF1">
    <property type="entry name" value="DNA-DIRECTED RNA POLYMERASE SUBUNIT OMEGA"/>
    <property type="match status" value="1"/>
</dbReference>
<dbReference type="Pfam" id="PF01192">
    <property type="entry name" value="RNA_pol_Rpb6"/>
    <property type="match status" value="1"/>
</dbReference>
<dbReference type="SMART" id="SM01409">
    <property type="entry name" value="RNA_pol_Rpb6"/>
    <property type="match status" value="1"/>
</dbReference>
<dbReference type="SUPFAM" id="SSF63562">
    <property type="entry name" value="RPB6/omega subunit-like"/>
    <property type="match status" value="1"/>
</dbReference>
<organism>
    <name type="scientific">Corynebacterium diphtheriae (strain ATCC 700971 / NCTC 13129 / Biotype gravis)</name>
    <dbReference type="NCBI Taxonomy" id="257309"/>
    <lineage>
        <taxon>Bacteria</taxon>
        <taxon>Bacillati</taxon>
        <taxon>Actinomycetota</taxon>
        <taxon>Actinomycetes</taxon>
        <taxon>Mycobacteriales</taxon>
        <taxon>Corynebacteriaceae</taxon>
        <taxon>Corynebacterium</taxon>
    </lineage>
</organism>
<keyword id="KW-0240">DNA-directed RNA polymerase</keyword>
<keyword id="KW-0548">Nucleotidyltransferase</keyword>
<keyword id="KW-1185">Reference proteome</keyword>
<keyword id="KW-0804">Transcription</keyword>
<keyword id="KW-0808">Transferase</keyword>
<comment type="function">
    <text evidence="1">Promotes RNA polymerase assembly. Latches the N- and C-terminal regions of the beta' subunit thereby facilitating its interaction with the beta and alpha subunits.</text>
</comment>
<comment type="catalytic activity">
    <reaction evidence="1">
        <text>RNA(n) + a ribonucleoside 5'-triphosphate = RNA(n+1) + diphosphate</text>
        <dbReference type="Rhea" id="RHEA:21248"/>
        <dbReference type="Rhea" id="RHEA-COMP:14527"/>
        <dbReference type="Rhea" id="RHEA-COMP:17342"/>
        <dbReference type="ChEBI" id="CHEBI:33019"/>
        <dbReference type="ChEBI" id="CHEBI:61557"/>
        <dbReference type="ChEBI" id="CHEBI:140395"/>
        <dbReference type="EC" id="2.7.7.6"/>
    </reaction>
</comment>
<comment type="subunit">
    <text evidence="1">The RNAP catalytic core consists of 2 alpha, 1 beta, 1 beta' and 1 omega subunit. When a sigma factor is associated with the core the holoenzyme is formed, which can initiate transcription.</text>
</comment>
<comment type="similarity">
    <text evidence="1">Belongs to the RNA polymerase subunit omega family.</text>
</comment>